<dbReference type="EC" id="1.-.-.-" evidence="16"/>
<dbReference type="EMBL" id="EU520417">
    <property type="protein sequence ID" value="ACD39759.1"/>
    <property type="molecule type" value="Genomic_DNA"/>
</dbReference>
<dbReference type="EMBL" id="EU520418">
    <property type="protein sequence ID" value="ACD39768.1"/>
    <property type="molecule type" value="Genomic_DNA"/>
</dbReference>
<dbReference type="SMR" id="B3FWS5"/>
<dbReference type="GlyCosmos" id="B3FWS5">
    <property type="glycosylation" value="3 sites, No reported glycans"/>
</dbReference>
<dbReference type="GO" id="GO:0071949">
    <property type="term" value="F:FAD binding"/>
    <property type="evidence" value="ECO:0007669"/>
    <property type="project" value="InterPro"/>
</dbReference>
<dbReference type="GO" id="GO:0016491">
    <property type="term" value="F:oxidoreductase activity"/>
    <property type="evidence" value="ECO:0007669"/>
    <property type="project" value="UniProtKB-KW"/>
</dbReference>
<dbReference type="Gene3D" id="3.30.465.10">
    <property type="match status" value="1"/>
</dbReference>
<dbReference type="InterPro" id="IPR016166">
    <property type="entry name" value="FAD-bd_PCMH"/>
</dbReference>
<dbReference type="InterPro" id="IPR036318">
    <property type="entry name" value="FAD-bd_PCMH-like_sf"/>
</dbReference>
<dbReference type="InterPro" id="IPR016169">
    <property type="entry name" value="FAD-bd_PCMH_sub2"/>
</dbReference>
<dbReference type="InterPro" id="IPR050432">
    <property type="entry name" value="FAD-linked_Oxidoreductases_BP"/>
</dbReference>
<dbReference type="InterPro" id="IPR006094">
    <property type="entry name" value="Oxid_FAD_bind_N"/>
</dbReference>
<dbReference type="PANTHER" id="PTHR13878:SF91">
    <property type="entry name" value="FAD BINDING DOMAIN PROTEIN (AFU_ORTHOLOGUE AFUA_6G12070)-RELATED"/>
    <property type="match status" value="1"/>
</dbReference>
<dbReference type="PANTHER" id="PTHR13878">
    <property type="entry name" value="GULONOLACTONE OXIDASE"/>
    <property type="match status" value="1"/>
</dbReference>
<dbReference type="Pfam" id="PF01565">
    <property type="entry name" value="FAD_binding_4"/>
    <property type="match status" value="1"/>
</dbReference>
<dbReference type="SUPFAM" id="SSF56176">
    <property type="entry name" value="FAD-binding/transporter-associated domain-like"/>
    <property type="match status" value="1"/>
</dbReference>
<dbReference type="PROSITE" id="PS51387">
    <property type="entry name" value="FAD_PCMH"/>
    <property type="match status" value="1"/>
</dbReference>
<feature type="signal peptide" evidence="1">
    <location>
        <begin position="1"/>
        <end position="29"/>
    </location>
</feature>
<feature type="chain" id="PRO_5007640112" description="FAD-linked oxidoreductase hmp9" evidence="1">
    <location>
        <begin position="30"/>
        <end position="628"/>
    </location>
</feature>
<feature type="domain" description="FAD-binding PCMH-type" evidence="3">
    <location>
        <begin position="152"/>
        <end position="337"/>
    </location>
</feature>
<feature type="region of interest" description="Disordered" evidence="4">
    <location>
        <begin position="34"/>
        <end position="53"/>
    </location>
</feature>
<feature type="glycosylation site" description="N-linked (GlcNAc...) asparagine" evidence="2">
    <location>
        <position position="80"/>
    </location>
</feature>
<feature type="glycosylation site" description="N-linked (GlcNAc...) asparagine" evidence="2">
    <location>
        <position position="133"/>
    </location>
</feature>
<feature type="glycosylation site" description="N-linked (GlcNAc...) asparagine" evidence="2">
    <location>
        <position position="356"/>
    </location>
</feature>
<protein>
    <recommendedName>
        <fullName evidence="16">FAD-linked oxidoreductase hmp9</fullName>
        <ecNumber evidence="16">1.-.-.-</ecNumber>
    </recommendedName>
    <alternativeName>
        <fullName evidence="15">Hypothemycin biosynthesis cluster protein hpm9</fullName>
    </alternativeName>
</protein>
<sequence>MFCIIRAQLLLLLHLLVLALLLVGTVCNAHPQHGHPSELEPLALKRGGSPRDDGNTLAPRCRCIPGEACWPSTQIWDSFNRTIGGSLIKTAPLAESCYPGPKKNTRKCAVVSRKWTDQDFQTDSPVGRTYPYNITCAPVNYFAGQRPTTCSLGQLPVYAIDARTRQSVAQGLRFAKDNNLRVTVVSTGHDLLGRADGYGSLEIWLRHHRNEIRFERQYMATDGCRESGWTGSAIDIDGAYQWRDVHIKARANNVIVVGGGSVSPGAIGGWPSGGGHGPASRNYGLGADQILEAEVMLADGSVVLANHCQHTDLFRALRGGGPGFGVVLKTKIKAYPNVASVSVHHLTITPIRQTPNNSDLLDAVAVLMQAYPKLSDDGYAGYAFWLRNCKSFFIGSAKSGYRHGIWMIGKTTEEAEHSFAPVREALDKFKSKLTISESYMTYNDYWSFYTSESGLYESVGTTSVLTSRLIDRPAVEDYNRVREAVEVIGGKPEDYATNVMMLVSNGQVFADAADKSSGLNPAWRVSPYVVISSRGIPMVVDQASRKEVADDITYVKGAALQKLAPNTGGYMNEGDRNDPNYIKNFFGTIYPTHLATKKKYDPWGLFYCPTCVGAELFEETSRGELCRR</sequence>
<reference key="1">
    <citation type="journal article" date="2008" name="Appl. Environ. Microbiol.">
        <title>Genes for the biosynthesis of the fungal polyketides hypothemycin from Hypomyces subiculosus and radicicol from Pochonia chlamydosporia.</title>
        <authorList>
            <person name="Reeves C.D."/>
            <person name="Hu Z."/>
            <person name="Reid R."/>
            <person name="Kealey J.T."/>
        </authorList>
    </citation>
    <scope>NUCLEOTIDE SEQUENCE [GENOMIC DNA]</scope>
    <scope>FUNCTION</scope>
    <source>
        <strain>DSM11931</strain>
        <strain>DSM11932</strain>
    </source>
</reference>
<reference key="2">
    <citation type="journal article" date="1999" name="Immunopharmacology">
        <title>Hypothemycin inhibits the proliferative response and modulates the production of cytokines during T cell activation.</title>
        <authorList>
            <person name="Camacho R."/>
            <person name="Staruch M.J."/>
            <person name="DaSilva C."/>
            <person name="Koprak S."/>
            <person name="Sewell T."/>
            <person name="Salituro G."/>
            <person name="Dumont F.J."/>
        </authorList>
    </citation>
    <scope>BIOTECHNOLOGY</scope>
</reference>
<reference key="3">
    <citation type="journal article" date="1999" name="Jpn. J. Cancer Res.">
        <title>Antitumor efficacy of hypothemycin, a new Ras-signaling inhibitor.</title>
        <authorList>
            <person name="Tanaka H."/>
            <person name="Nishida K."/>
            <person name="Sugita K."/>
            <person name="Yoshioka T."/>
        </authorList>
    </citation>
    <scope>BIOTECHNOLOGY</scope>
</reference>
<reference key="4">
    <citation type="journal article" date="1999" name="Life Sci.">
        <title>Suppression of oncogenic transformation by hypothemycin associated with accelerated cyclin D1 degradation through ubiquitin-proteasome pathway.</title>
        <authorList>
            <person name="Sonoda H."/>
            <person name="Omi K."/>
            <person name="Hojo K."/>
            <person name="Nishida K."/>
            <person name="Omura S."/>
            <person name="Sugita K."/>
        </authorList>
    </citation>
    <scope>BIOTECHNOLOGY</scope>
</reference>
<reference key="5">
    <citation type="journal article" date="2008" name="J. Struct. Biol.">
        <title>Molecular modeling and crystal structure of ERK2-hypothemycin complexes.</title>
        <authorList>
            <person name="Rastelli G."/>
            <person name="Rosenfeld R."/>
            <person name="Reid R."/>
            <person name="Santi D.V."/>
        </authorList>
    </citation>
    <scope>BIOTECHNOLOGY</scope>
</reference>
<reference key="6">
    <citation type="journal article" date="2010" name="Biol. Pharm. Bull.">
        <title>The resorcylic acid lactone hypothemycin selectively inhibits the mitogen-activated protein kinase kinase-extracellular signal-regulated kinase pathway in cells.</title>
        <authorList>
            <person name="Fukazawa H."/>
            <person name="Ikeda Y."/>
            <person name="Fukuyama M."/>
            <person name="Suzuki T."/>
            <person name="Hori H."/>
            <person name="Okuda T."/>
            <person name="Uehara Y."/>
        </authorList>
    </citation>
    <scope>BIOTECHNOLOGY</scope>
</reference>
<reference key="7">
    <citation type="journal article" date="2010" name="J. Am. Chem. Soc.">
        <title>Enzymatic synthesis of resorcylic acid lactones by cooperation of fungal iterative polyketide synthases involved in hypothemycin biosynthesis.</title>
        <authorList>
            <person name="Zhou H."/>
            <person name="Qiao K."/>
            <person name="Gao Z."/>
            <person name="Meehan M.J."/>
            <person name="Li J.W."/>
            <person name="Zhao X."/>
            <person name="Dorrestein P.C."/>
            <person name="Vederas J.C."/>
            <person name="Tang Y."/>
        </authorList>
    </citation>
    <scope>FUNCTION</scope>
</reference>
<reference key="8">
    <citation type="journal article" date="2013" name="Elife">
        <title>Hypothemycin, a fungal natural product, identifies therapeutic targets in Trypanosoma brucei [corrected].</title>
        <authorList>
            <person name="Nishino M."/>
            <person name="Choy J.W."/>
            <person name="Gushwa N.N."/>
            <person name="Oses-Prieto J.A."/>
            <person name="Koupparis K."/>
            <person name="Burlingame A.L."/>
            <person name="Renslo A.R."/>
            <person name="McKerrow J.H."/>
            <person name="Taunton J."/>
        </authorList>
    </citation>
    <scope>BIOTECHNOLOGY</scope>
</reference>
<reference key="9">
    <citation type="journal article" date="2013" name="J. Agric. Food Chem.">
        <title>Antifungal activity of hypothemycin against Peronophythora litchii in vitro and in vivo.</title>
        <authorList>
            <person name="Xu L."/>
            <person name="Xue J."/>
            <person name="Wu P."/>
            <person name="Wang D."/>
            <person name="Lin L."/>
            <person name="Jiang Y."/>
            <person name="Duan X."/>
            <person name="Wei X."/>
        </authorList>
    </citation>
    <scope>BIOTECHNOLOGY</scope>
</reference>
<reference key="10">
    <citation type="journal article" date="2015" name="Int. Immunopharmacol.">
        <title>Hypothemycin inhibits tumor necrosis factor-alpha production by tristetraprolin-dependent down-regulation of mRNA stability in lipopolysaccharide-stimulated macrophages.</title>
        <authorList>
            <person name="Park K.H."/>
            <person name="Yoon Y.D."/>
            <person name="Kang M.R."/>
            <person name="Yun J."/>
            <person name="Oh S.J."/>
            <person name="Lee C.W."/>
            <person name="Lee M.Y."/>
            <person name="Han S.B."/>
            <person name="Kim Y."/>
            <person name="Kang J.S."/>
        </authorList>
    </citation>
    <scope>BIOTECHNOLOGY</scope>
</reference>
<comment type="function">
    <text evidence="8 11">FAD-linked oxidoreductase; part of the gene cluster that mediates the biosynthesis of hypothemycin, a resorcylic acid lactone (RAL) that irreversibly inhibits a subset of protein kinases with a conserved cysteine in the ATP binding site such as human ERK2 (PubMed:18567690). The first step is performed by both PKSs hmp3 and hmp8 and leads to the production of 7',8'-dehydrozearalenol (DHZ) (PubMed:18567690, PubMed:20222707). The highly reducing PKS hpm8 synthesizes the reduced hexaketide (7S,11S,2E,8E)-7,11-dihydroxy-dodeca-2,8-dienoate, which is transferred downstream to the non-reducing PKS hpm3 (PubMed:20222707). Hpm3 then extends the reduced hexaketide to a nonaketide, after which regioselective cyclization and macrolactonization affords DHZ (PubMed:20222707). The next step is the conversion of DHZ into aigialomycin C and is performed by the O-methyltransferase hmp5, the FAD-binding monooxygenase hmp7, and the cytochrome P450 monooxygenase hmp1 (PubMed:18567690). The wide substrate tolerance of the hmp5 and hmp7 implies that the reactions from DHZ to aigialomycin C can occur in any order (PubMed:18567690). The steps from aigialomycin C to hypothemycin are less well established (PubMed:18567690). The FAD-linked oxidoreductase hmp9 presumably catalyzes oxidation of the C-6' hydroxyl to a ketone (PubMed:18567690). The timing of this oxidation is important, since the resulting enone functional group is a Michael acceptor that can react spontaneously with glutathione, an abundant metabolite in fungal cells (PubMed:18567690). The glutathione S-transferase hmp2 catalyzes cis-trans isomerization of the 7',8' double bond with equilibrium favoring the trans isomer (PubMed:18567690). The hpm6-encoded transporter might preferentially pump hypothemycin out of the cell relative to the trans isomer aigialomycin A. The cis-to-trans isomerization may be coupled with C-4' hydroxylation, since all known hypothemycin analogs containing the enone functional group also have hydroxyl groups at both C-4' and C-5' (PubMed:18567690).</text>
</comment>
<comment type="pathway">
    <text evidence="8">Secondary metabolite biosynthesis.</text>
</comment>
<comment type="biotechnology">
    <text evidence="5 6 7 9 10 12 13 14">Hypothemycin is an antifungal agent that exhibits excellent activity against Peronophythora litchii, which could be helpful for the storage of harvest litchi fruit (PubMed:24106914). Hypothemycin is a strong inhibitor of a subset of MAP kinases such as human ERK2 (PubMed:18571434, PubMed:20118535, PubMed:26371861). It can therefore be used as an anti-cancer drug thanks to its inhibitory activity of Ras-mediated cellular signals (PubMed:10421424, PubMed:10595743). It can also inhibit Trypanosoma brucei kinase TbCLK1 which is a good candidate as a therapeutic target for African trypanosomiasis (PubMed:23853713). Finally, hypothemycin also has inhibitor activity of T cell activation (PubMed:10598882).</text>
</comment>
<comment type="similarity">
    <text evidence="16">Belongs to the oxygen-dependent FAD-linked oxidoreductase family.</text>
</comment>
<gene>
    <name evidence="15" type="primary">hpm9</name>
</gene>
<evidence type="ECO:0000255" key="1"/>
<evidence type="ECO:0000255" key="2">
    <source>
        <dbReference type="PROSITE-ProRule" id="PRU00498"/>
    </source>
</evidence>
<evidence type="ECO:0000255" key="3">
    <source>
        <dbReference type="PROSITE-ProRule" id="PRU00718"/>
    </source>
</evidence>
<evidence type="ECO:0000256" key="4">
    <source>
        <dbReference type="SAM" id="MobiDB-lite"/>
    </source>
</evidence>
<evidence type="ECO:0000269" key="5">
    <source>
    </source>
</evidence>
<evidence type="ECO:0000269" key="6">
    <source>
    </source>
</evidence>
<evidence type="ECO:0000269" key="7">
    <source>
    </source>
</evidence>
<evidence type="ECO:0000269" key="8">
    <source>
    </source>
</evidence>
<evidence type="ECO:0000269" key="9">
    <source>
    </source>
</evidence>
<evidence type="ECO:0000269" key="10">
    <source>
    </source>
</evidence>
<evidence type="ECO:0000269" key="11">
    <source>
    </source>
</evidence>
<evidence type="ECO:0000269" key="12">
    <source>
    </source>
</evidence>
<evidence type="ECO:0000269" key="13">
    <source>
    </source>
</evidence>
<evidence type="ECO:0000269" key="14">
    <source>
    </source>
</evidence>
<evidence type="ECO:0000303" key="15">
    <source>
    </source>
</evidence>
<evidence type="ECO:0000305" key="16"/>
<accession>B3FWS5</accession>
<name>HPM9_HYPSB</name>
<organism>
    <name type="scientific">Hypomyces subiculosus</name>
    <name type="common">Nectria subiculosa</name>
    <dbReference type="NCBI Taxonomy" id="193393"/>
    <lineage>
        <taxon>Eukaryota</taxon>
        <taxon>Fungi</taxon>
        <taxon>Dikarya</taxon>
        <taxon>Ascomycota</taxon>
        <taxon>Pezizomycotina</taxon>
        <taxon>Sordariomycetes</taxon>
        <taxon>Hypocreomycetidae</taxon>
        <taxon>Hypocreales</taxon>
        <taxon>Hypocreaceae</taxon>
        <taxon>Hypomyces</taxon>
    </lineage>
</organism>
<keyword id="KW-0325">Glycoprotein</keyword>
<keyword id="KW-0560">Oxidoreductase</keyword>
<keyword id="KW-0732">Signal</keyword>
<proteinExistence type="evidence at protein level"/>